<accession>Q9C0K0</accession>
<accession>Q9H162</accession>
<name>BC11B_HUMAN</name>
<gene>
    <name type="primary">BCL11B</name>
    <name type="synonym">CTIP2</name>
    <name type="synonym">RIT1</name>
</gene>
<sequence>MSRRKQGNPQHLSQRELITPEADHVEAAILEEDEGLEIEEPSGLGLMVGGPDPDLLTCGQCQMNFPLGDILVFIEHKRKQCGGSLGACYDKALDKDSPPPSSRSELRKVSEPVEIGIQVTPDEDDHLLSPTKGICPKQENIAGPCRPAQLPAVAPIAASSHPHSSVITSPLRALGALPPCLPLPCCSARPVSGDGTQGEGQTEAPFGCQCQLSGKDEPSSYICTTCKQPFNSAWFLLQHAQNTHGFRIYLEPGPASSSLTPRLTIPPPLGPEAVAQSPLMNFLGDSNPFNLLRMTGPILRDHPGFGEGRLPGTPPLFSPPPRHHLDPHRLSAEEMGLVAQHPSAFDRVMRLNPMAIDSPAMDFSRRLRELAGNSSTPPPVSPGRGNPMHRLLNPFQPSPKSPFLSTPPLPPMPPGGTPPPQPPAKSKSCEFCGKTFKFQSNLIVHRRSHTGEKPYKCQLCDHACSQASKLKRHMKTHMHKAGSLAGRSDDGLSAASSPEPGTSELAGEGLKAADGDFRHHESDPSLGHEPEEEDEEEEEEEEELLLENESRPESSFSMDSELSRNRENGGGGVPGVPGAGGGAAKALADEKALVLGKVMENVGLGALPQYGELLADKQKRGAFLKRAAGGGDAGDDDDAGGCGDAGAGGAVNGRGGGFAPGTEPFPGLFPRKPAPLPSPGLNSAAKRIKVEKDLELPPAALIPSENVYSQWLVGYAASRHFMKDPFLGFTDARQSPFATSSEHSSENGSLRFSTPPGDLLDGGLSGRSGTASGGSTPHLGGPGPGRPSSKEGRRSDTCEYCGKVFKNCSNLTVHRRSHTGERPYKCELCNYACAQSSKLTRHMKTHGQIGKEVYRCDICQMPFSVYSTLEKHMKKWHGEHLLTNDVKIEQAERS</sequence>
<evidence type="ECO:0000250" key="1"/>
<evidence type="ECO:0000250" key="2">
    <source>
        <dbReference type="UniProtKB" id="Q99PV8"/>
    </source>
</evidence>
<evidence type="ECO:0000255" key="3">
    <source>
        <dbReference type="PROSITE-ProRule" id="PRU00042"/>
    </source>
</evidence>
<evidence type="ECO:0000256" key="4">
    <source>
        <dbReference type="SAM" id="MobiDB-lite"/>
    </source>
</evidence>
<evidence type="ECO:0000269" key="5">
    <source>
    </source>
</evidence>
<evidence type="ECO:0000269" key="6">
    <source>
    </source>
</evidence>
<evidence type="ECO:0000269" key="7">
    <source>
    </source>
</evidence>
<evidence type="ECO:0000269" key="8">
    <source>
    </source>
</evidence>
<evidence type="ECO:0000269" key="9">
    <source>
    </source>
</evidence>
<evidence type="ECO:0000303" key="10">
    <source>
    </source>
</evidence>
<evidence type="ECO:0000305" key="11"/>
<evidence type="ECO:0007744" key="12">
    <source>
    </source>
</evidence>
<evidence type="ECO:0007744" key="13">
    <source>
    </source>
</evidence>
<evidence type="ECO:0007744" key="14">
    <source>
    </source>
</evidence>
<evidence type="ECO:0007744" key="15">
    <source>
    </source>
</evidence>
<evidence type="ECO:0007744" key="16">
    <source>
    </source>
</evidence>
<protein>
    <recommendedName>
        <fullName>B-cell lymphoma/leukemia 11B</fullName>
        <shortName>BCL-11B</shortName>
    </recommendedName>
    <alternativeName>
        <fullName>B-cell CLL/lymphoma 11B</fullName>
    </alternativeName>
    <alternativeName>
        <fullName>COUP-TF-interacting protein 2</fullName>
    </alternativeName>
    <alternativeName>
        <fullName>Radiation-induced tumor suppressor gene 1 protein</fullName>
        <shortName>hRit1</shortName>
    </alternativeName>
</protein>
<proteinExistence type="evidence at protein level"/>
<keyword id="KW-0007">Acetylation</keyword>
<keyword id="KW-0025">Alternative splicing</keyword>
<keyword id="KW-0225">Disease variant</keyword>
<keyword id="KW-0991">Intellectual disability</keyword>
<keyword id="KW-1017">Isopeptide bond</keyword>
<keyword id="KW-0479">Metal-binding</keyword>
<keyword id="KW-0488">Methylation</keyword>
<keyword id="KW-0539">Nucleus</keyword>
<keyword id="KW-0597">Phosphoprotein</keyword>
<keyword id="KW-1267">Proteomics identification</keyword>
<keyword id="KW-1185">Reference proteome</keyword>
<keyword id="KW-0677">Repeat</keyword>
<keyword id="KW-0678">Repressor</keyword>
<keyword id="KW-0705">SCID</keyword>
<keyword id="KW-0804">Transcription</keyword>
<keyword id="KW-0805">Transcription regulation</keyword>
<keyword id="KW-0832">Ubl conjugation</keyword>
<keyword id="KW-0862">Zinc</keyword>
<keyword id="KW-0863">Zinc-finger</keyword>
<reference key="1">
    <citation type="journal article" date="2001" name="Blood">
        <title>The BCL11 gene family: involvement of BCL11A in lymphoid malignancies.</title>
        <authorList>
            <person name="Satterwhite E."/>
            <person name="Sonoki T."/>
            <person name="Willis T.G."/>
            <person name="Harder L."/>
            <person name="Nowak R."/>
            <person name="Arriola E.L."/>
            <person name="Liu H."/>
            <person name="Price H.P."/>
            <person name="Gesk S."/>
            <person name="Steinemann D."/>
            <person name="Schlegelberger B."/>
            <person name="Oscier D.G."/>
            <person name="Siebert R."/>
            <person name="Tucker P.W."/>
            <person name="Dyer M.J."/>
        </authorList>
    </citation>
    <scope>NUCLEOTIDE SEQUENCE [MRNA] (ISOFORM 2)</scope>
</reference>
<reference key="2">
    <citation type="journal article" date="2003" name="Biochem. Biophys. Res. Commun.">
        <title>Homozygous deletions and point mutations of the Rit1/Bcl11b gene in gamma-ray induced mouse thymic lymphomas.</title>
        <authorList>
            <person name="Wakabayashi Y."/>
            <person name="Inoue J."/>
            <person name="Takahashi Y."/>
            <person name="Matsuki A."/>
            <person name="Kosugi-Okano H."/>
            <person name="Shinbo T."/>
            <person name="Mishima Y."/>
            <person name="Niwa O."/>
            <person name="Kominami R."/>
        </authorList>
    </citation>
    <scope>NUCLEOTIDE SEQUENCE [MRNA] (ISOFORM 1)</scope>
    <source>
        <tissue>Thymus</tissue>
    </source>
</reference>
<reference key="3">
    <citation type="journal article" date="2006" name="Blood">
        <title>BCL11B participates in the activation of IL2 gene expression in CD4+ T lymphocytes.</title>
        <authorList>
            <person name="Cismasiu V.B."/>
            <person name="Ghanta S."/>
            <person name="Duque J."/>
            <person name="Albu D.I."/>
            <person name="Chen H.M."/>
            <person name="Kasturi R."/>
            <person name="Avram D."/>
        </authorList>
    </citation>
    <scope>FUNCTION</scope>
    <scope>INTERACTION WITH EP300</scope>
</reference>
<reference key="4">
    <citation type="journal article" date="2009" name="Sci. Signal.">
        <title>Quantitative phosphoproteomic analysis of T cell receptor signaling reveals system-wide modulation of protein-protein interactions.</title>
        <authorList>
            <person name="Mayya V."/>
            <person name="Lundgren D.H."/>
            <person name="Hwang S.-I."/>
            <person name="Rezaul K."/>
            <person name="Wu L."/>
            <person name="Eng J.K."/>
            <person name="Rodionov V."/>
            <person name="Han D.K."/>
        </authorList>
    </citation>
    <scope>PHOSPHORYLATION [LARGE SCALE ANALYSIS] AT SER-97; THR-120; SER-256; THR-260; SER-277; SER-358; THR-376; SER-381; SER-398; THR-417; SER-483; SER-488; SER-496; SER-497; SER-678 AND SER-765</scope>
    <scope>IDENTIFICATION BY MASS SPECTROMETRY [LARGE SCALE ANALYSIS]</scope>
    <source>
        <tissue>Leukemic T-cell</tissue>
    </source>
</reference>
<reference key="5">
    <citation type="journal article" date="2009" name="Science">
        <title>Lysine acetylation targets protein complexes and co-regulates major cellular functions.</title>
        <authorList>
            <person name="Choudhary C."/>
            <person name="Kumar C."/>
            <person name="Gnad F."/>
            <person name="Nielsen M.L."/>
            <person name="Rehman M."/>
            <person name="Walther T.C."/>
            <person name="Olsen J.V."/>
            <person name="Mann M."/>
        </authorList>
    </citation>
    <scope>ACETYLATION [LARGE SCALE ANALYSIS] AT LYS-851</scope>
    <scope>IDENTIFICATION BY MASS SPECTROMETRY [LARGE SCALE ANALYSIS]</scope>
</reference>
<reference key="6">
    <citation type="journal article" date="2014" name="J. Proteomics">
        <title>An enzyme assisted RP-RPLC approach for in-depth analysis of human liver phosphoproteome.</title>
        <authorList>
            <person name="Bian Y."/>
            <person name="Song C."/>
            <person name="Cheng K."/>
            <person name="Dong M."/>
            <person name="Wang F."/>
            <person name="Huang J."/>
            <person name="Sun D."/>
            <person name="Wang L."/>
            <person name="Ye M."/>
            <person name="Zou H."/>
        </authorList>
    </citation>
    <scope>PHOSPHORYLATION [LARGE SCALE ANALYSIS] AT SER-381</scope>
    <scope>IDENTIFICATION BY MASS SPECTROMETRY [LARGE SCALE ANALYSIS]</scope>
    <source>
        <tissue>Liver</tissue>
    </source>
</reference>
<reference key="7">
    <citation type="journal article" date="2015" name="Mol. Cell. Proteomics">
        <title>System-wide analysis of SUMOylation dynamics in response to replication stress reveals novel small ubiquitin-like modified target proteins and acceptor lysines relevant for genome stability.</title>
        <authorList>
            <person name="Xiao Z."/>
            <person name="Chang J.G."/>
            <person name="Hendriks I.A."/>
            <person name="Sigurdsson J.O."/>
            <person name="Olsen J.V."/>
            <person name="Vertegaal A.C."/>
        </authorList>
    </citation>
    <scope>SUMOYLATION [LARGE SCALE ANALYSIS] AT LYS-591 AND LYS-887</scope>
    <scope>SUMOYLATION [LARGE SCALE ANALYSIS] AT LYS-137 (ISOFORM 2)</scope>
    <scope>IDENTIFICATION BY MASS SPECTROMETRY [LARGE SCALE ANALYSIS]</scope>
</reference>
<reference key="8">
    <citation type="journal article" date="2017" name="Nat. Struct. Mol. Biol.">
        <title>Site-specific mapping of the human SUMO proteome reveals co-modification with phosphorylation.</title>
        <authorList>
            <person name="Hendriks I.A."/>
            <person name="Lyon D."/>
            <person name="Young C."/>
            <person name="Jensen L.J."/>
            <person name="Vertegaal A.C."/>
            <person name="Nielsen M.L."/>
        </authorList>
    </citation>
    <scope>SUMOYLATION [LARGE SCALE ANALYSIS] AT LYS-137; LYS-591; LYS-617; LYS-686; LYS-723 AND LYS-887</scope>
    <scope>SUMOYLATION [LARGE SCALE ANALYSIS] AT LYS-137 (ISOFORM 2)</scope>
    <scope>IDENTIFICATION BY MASS SPECTROMETRY [LARGE SCALE ANALYSIS]</scope>
</reference>
<reference key="9">
    <citation type="journal article" date="2006" name="Science">
        <title>The consensus coding sequences of human breast and colorectal cancers.</title>
        <authorList>
            <person name="Sjoeblom T."/>
            <person name="Jones S."/>
            <person name="Wood L.D."/>
            <person name="Parsons D.W."/>
            <person name="Lin J."/>
            <person name="Barber T.D."/>
            <person name="Mandelker D."/>
            <person name="Leary R.J."/>
            <person name="Ptak J."/>
            <person name="Silliman N."/>
            <person name="Szabo S."/>
            <person name="Buckhaults P."/>
            <person name="Farrell C."/>
            <person name="Meeh P."/>
            <person name="Markowitz S.D."/>
            <person name="Willis J."/>
            <person name="Dawson D."/>
            <person name="Willson J.K.V."/>
            <person name="Gazdar A.F."/>
            <person name="Hartigan J."/>
            <person name="Wu L."/>
            <person name="Liu C."/>
            <person name="Parmigiani G."/>
            <person name="Park B.H."/>
            <person name="Bachman K.E."/>
            <person name="Papadopoulos N."/>
            <person name="Vogelstein B."/>
            <person name="Kinzler K.W."/>
            <person name="Velculescu V.E."/>
        </authorList>
    </citation>
    <scope>VARIANT [LARGE SCALE ANALYSIS] PRO-331</scope>
</reference>
<reference key="10">
    <citation type="journal article" date="2011" name="Arch. Neurol.">
        <title>Resequencing of 29 candidate genes in patients with familial and sporadic amyotrophic lateral sclerosis.</title>
        <authorList>
            <person name="Daoud H."/>
            <person name="Valdmanis P.N."/>
            <person name="Gros-Louis F."/>
            <person name="Belzil V."/>
            <person name="Spiegelman D."/>
            <person name="Henrion E."/>
            <person name="Diallo O."/>
            <person name="Desjarlais A."/>
            <person name="Gauthier J."/>
            <person name="Camu W."/>
            <person name="Dion P.A."/>
            <person name="Rouleau G.A."/>
        </authorList>
    </citation>
    <scope>VARIANTS VAL-32 AND SER-229</scope>
</reference>
<reference key="11">
    <citation type="journal article" date="2016" name="N. Engl. J. Med.">
        <title>Multisystem anomalies in severe combined immunodeficiency with mutant BCL11B.</title>
        <authorList>
            <person name="Punwani D."/>
            <person name="Zhang Y."/>
            <person name="Yu J."/>
            <person name="Cowan M.J."/>
            <person name="Rana S."/>
            <person name="Kwan A."/>
            <person name="Adhikari A.N."/>
            <person name="Lizama C.O."/>
            <person name="Mendelsohn B.A."/>
            <person name="Fahl S.P."/>
            <person name="Chellappan A."/>
            <person name="Srinivasan R."/>
            <person name="Brenner S.E."/>
            <person name="Wiest D.L."/>
            <person name="Puck J.M."/>
        </authorList>
    </citation>
    <scope>FUNCTION</scope>
    <scope>INTERACTION WITH EP300</scope>
    <scope>INVOLVEMENT IN IMD49</scope>
    <scope>VARIANT IMD49 LYS-441</scope>
    <scope>CHARACTERIZATION OF VARIANT IMD49 LYS-441</scope>
</reference>
<reference key="12">
    <citation type="journal article" date="2018" name="Brain">
        <title>BCL11B mutations in patients affected by a neurodevelopmental disorder with reduced type 2 innate lymphoid cells.</title>
        <authorList>
            <person name="Lessel D."/>
            <person name="Gehbauer C."/>
            <person name="Bramswig N.C."/>
            <person name="Schluth-Bolard C."/>
            <person name="Venkataramanappa S."/>
            <person name="van Gassen K.L.I."/>
            <person name="Hempel M."/>
            <person name="Haack T.B."/>
            <person name="Baresic A."/>
            <person name="Genetti C.A."/>
            <person name="Funari M.F.A."/>
            <person name="Lessel I."/>
            <person name="Kuhlmann L."/>
            <person name="Simon R."/>
            <person name="Liu P."/>
            <person name="Denecke J."/>
            <person name="Kuechler A."/>
            <person name="de Kruijff I."/>
            <person name="Shoukier M."/>
            <person name="Lek M."/>
            <person name="Mullen T."/>
            <person name="Luedecke H.J."/>
            <person name="Lerario A.M."/>
            <person name="Kobbe R."/>
            <person name="Krieger T."/>
            <person name="Demeer B."/>
            <person name="Lebrun M."/>
            <person name="Keren B."/>
            <person name="Nava C."/>
            <person name="Buratti J."/>
            <person name="Afenjar A."/>
            <person name="Shinawi M."/>
            <person name="Guillen Sacoto M.J."/>
            <person name="Gauthier J."/>
            <person name="Hamdan F.F."/>
            <person name="Laberge A.M."/>
            <person name="Campeau P.M."/>
            <person name="Louie R.J."/>
            <person name="Cathey S.S."/>
            <person name="Prinz I."/>
            <person name="Jorge A.A.L."/>
            <person name="Terhal P.A."/>
            <person name="Lenhard B."/>
            <person name="Wieczorek D."/>
            <person name="Strom T.M."/>
            <person name="Agrawal P.B."/>
            <person name="Britsch S."/>
            <person name="Tolosa E."/>
            <person name="Kubisch C."/>
        </authorList>
    </citation>
    <scope>INVOLVEMENT IN IDDSFTA</scope>
    <scope>VARIANT IMD49 LYS-807</scope>
    <scope>VARIANT IDDSFTA 499-GLU--SER-894 DEL</scope>
</reference>
<dbReference type="EMBL" id="AJ404614">
    <property type="protein sequence ID" value="CAC17726.1"/>
    <property type="molecule type" value="mRNA"/>
</dbReference>
<dbReference type="EMBL" id="AB043584">
    <property type="protein sequence ID" value="BAB32731.1"/>
    <property type="molecule type" value="mRNA"/>
</dbReference>
<dbReference type="CCDS" id="CCDS9949.1">
    <molecule id="Q9C0K0-2"/>
</dbReference>
<dbReference type="CCDS" id="CCDS9950.1">
    <molecule id="Q9C0K0-1"/>
</dbReference>
<dbReference type="RefSeq" id="NP_001269166.1">
    <property type="nucleotide sequence ID" value="NM_001282237.1"/>
</dbReference>
<dbReference type="RefSeq" id="NP_001269167.1">
    <property type="nucleotide sequence ID" value="NM_001282238.1"/>
</dbReference>
<dbReference type="RefSeq" id="NP_075049.1">
    <molecule id="Q9C0K0-2"/>
    <property type="nucleotide sequence ID" value="NM_022898.3"/>
</dbReference>
<dbReference type="RefSeq" id="NP_612808.1">
    <molecule id="Q9C0K0-1"/>
    <property type="nucleotide sequence ID" value="NM_138576.4"/>
</dbReference>
<dbReference type="SMR" id="Q9C0K0"/>
<dbReference type="BioGRID" id="122343">
    <property type="interactions" value="71"/>
</dbReference>
<dbReference type="DIP" id="DIP-44025N"/>
<dbReference type="FunCoup" id="Q9C0K0">
    <property type="interactions" value="944"/>
</dbReference>
<dbReference type="IntAct" id="Q9C0K0">
    <property type="interactions" value="37"/>
</dbReference>
<dbReference type="MINT" id="Q9C0K0"/>
<dbReference type="STRING" id="9606.ENSP00000349723"/>
<dbReference type="GlyGen" id="Q9C0K0">
    <property type="glycosylation" value="2 sites, 1 O-linked glycan (1 site)"/>
</dbReference>
<dbReference type="iPTMnet" id="Q9C0K0"/>
<dbReference type="MetOSite" id="Q9C0K0"/>
<dbReference type="PhosphoSitePlus" id="Q9C0K0"/>
<dbReference type="BioMuta" id="BCL11B"/>
<dbReference type="DMDM" id="44887723"/>
<dbReference type="jPOST" id="Q9C0K0"/>
<dbReference type="MassIVE" id="Q9C0K0"/>
<dbReference type="PaxDb" id="9606-ENSP00000349723"/>
<dbReference type="PeptideAtlas" id="Q9C0K0"/>
<dbReference type="ProteomicsDB" id="80066">
    <molecule id="Q9C0K0-1"/>
</dbReference>
<dbReference type="ProteomicsDB" id="80067">
    <molecule id="Q9C0K0-2"/>
</dbReference>
<dbReference type="Antibodypedia" id="27407">
    <property type="antibodies" value="275 antibodies from 36 providers"/>
</dbReference>
<dbReference type="DNASU" id="64919"/>
<dbReference type="Ensembl" id="ENST00000345514.2">
    <molecule id="Q9C0K0-2"/>
    <property type="protein sequence ID" value="ENSP00000280435.6"/>
    <property type="gene ID" value="ENSG00000127152.18"/>
</dbReference>
<dbReference type="Ensembl" id="ENST00000357195.8">
    <molecule id="Q9C0K0-1"/>
    <property type="protein sequence ID" value="ENSP00000349723.3"/>
    <property type="gene ID" value="ENSG00000127152.18"/>
</dbReference>
<dbReference type="GeneID" id="64919"/>
<dbReference type="KEGG" id="hsa:64919"/>
<dbReference type="MANE-Select" id="ENST00000357195.8">
    <property type="protein sequence ID" value="ENSP00000349723.3"/>
    <property type="RefSeq nucleotide sequence ID" value="NM_138576.4"/>
    <property type="RefSeq protein sequence ID" value="NP_612808.1"/>
</dbReference>
<dbReference type="UCSC" id="uc001yga.5">
    <molecule id="Q9C0K0-1"/>
    <property type="organism name" value="human"/>
</dbReference>
<dbReference type="AGR" id="HGNC:13222"/>
<dbReference type="CTD" id="64919"/>
<dbReference type="DisGeNET" id="64919"/>
<dbReference type="GeneCards" id="BCL11B"/>
<dbReference type="HGNC" id="HGNC:13222">
    <property type="gene designation" value="BCL11B"/>
</dbReference>
<dbReference type="HPA" id="ENSG00000127152">
    <property type="expression patterns" value="Group enriched (brain, lymphoid tissue, skin)"/>
</dbReference>
<dbReference type="MalaCards" id="BCL11B"/>
<dbReference type="MIM" id="606558">
    <property type="type" value="gene"/>
</dbReference>
<dbReference type="MIM" id="617237">
    <property type="type" value="phenotype"/>
</dbReference>
<dbReference type="MIM" id="618092">
    <property type="type" value="phenotype"/>
</dbReference>
<dbReference type="neXtProt" id="NX_Q9C0K0"/>
<dbReference type="OpenTargets" id="ENSG00000127152"/>
<dbReference type="Orphanet" id="662829">
    <property type="disease" value="Intellectual disability-speech delay-dysmorphic features-T cell abnormalities syndrome"/>
</dbReference>
<dbReference type="PharmGKB" id="PA25301"/>
<dbReference type="VEuPathDB" id="HostDB:ENSG00000127152"/>
<dbReference type="eggNOG" id="KOG1721">
    <property type="taxonomic scope" value="Eukaryota"/>
</dbReference>
<dbReference type="GeneTree" id="ENSGT00940000161060"/>
<dbReference type="InParanoid" id="Q9C0K0"/>
<dbReference type="OMA" id="DKMTDRG"/>
<dbReference type="OrthoDB" id="10046198at2759"/>
<dbReference type="PAN-GO" id="Q9C0K0">
    <property type="GO annotations" value="4 GO annotations based on evolutionary models"/>
</dbReference>
<dbReference type="PhylomeDB" id="Q9C0K0"/>
<dbReference type="TreeFam" id="TF318131"/>
<dbReference type="PathwayCommons" id="Q9C0K0"/>
<dbReference type="SignaLink" id="Q9C0K0"/>
<dbReference type="SIGNOR" id="Q9C0K0"/>
<dbReference type="BioGRID-ORCS" id="64919">
    <property type="hits" value="22 hits in 1169 CRISPR screens"/>
</dbReference>
<dbReference type="ChiTaRS" id="BCL11B">
    <property type="organism name" value="human"/>
</dbReference>
<dbReference type="GeneWiki" id="BCL11B"/>
<dbReference type="GenomeRNAi" id="64919"/>
<dbReference type="Pharos" id="Q9C0K0">
    <property type="development level" value="Tbio"/>
</dbReference>
<dbReference type="PRO" id="PR:Q9C0K0"/>
<dbReference type="Proteomes" id="UP000005640">
    <property type="component" value="Chromosome 14"/>
</dbReference>
<dbReference type="RNAct" id="Q9C0K0">
    <property type="molecule type" value="protein"/>
</dbReference>
<dbReference type="Bgee" id="ENSG00000127152">
    <property type="expression patterns" value="Expressed in thymus and 149 other cell types or tissues"/>
</dbReference>
<dbReference type="ExpressionAtlas" id="Q9C0K0">
    <property type="expression patterns" value="baseline and differential"/>
</dbReference>
<dbReference type="GO" id="GO:0043005">
    <property type="term" value="C:neuron projection"/>
    <property type="evidence" value="ECO:0007669"/>
    <property type="project" value="Ensembl"/>
</dbReference>
<dbReference type="GO" id="GO:0005634">
    <property type="term" value="C:nucleus"/>
    <property type="evidence" value="ECO:0000318"/>
    <property type="project" value="GO_Central"/>
</dbReference>
<dbReference type="GO" id="GO:0016514">
    <property type="term" value="C:SWI/SNF complex"/>
    <property type="evidence" value="ECO:0000314"/>
    <property type="project" value="UniProtKB"/>
</dbReference>
<dbReference type="GO" id="GO:0001228">
    <property type="term" value="F:DNA-binding transcription activator activity, RNA polymerase II-specific"/>
    <property type="evidence" value="ECO:0007669"/>
    <property type="project" value="Ensembl"/>
</dbReference>
<dbReference type="GO" id="GO:0003700">
    <property type="term" value="F:DNA-binding transcription factor activity"/>
    <property type="evidence" value="ECO:0000318"/>
    <property type="project" value="GO_Central"/>
</dbReference>
<dbReference type="GO" id="GO:0000978">
    <property type="term" value="F:RNA polymerase II cis-regulatory region sequence-specific DNA binding"/>
    <property type="evidence" value="ECO:0000318"/>
    <property type="project" value="GO_Central"/>
</dbReference>
<dbReference type="GO" id="GO:1990837">
    <property type="term" value="F:sequence-specific double-stranded DNA binding"/>
    <property type="evidence" value="ECO:0000314"/>
    <property type="project" value="ARUK-UCL"/>
</dbReference>
<dbReference type="GO" id="GO:0008270">
    <property type="term" value="F:zinc ion binding"/>
    <property type="evidence" value="ECO:0007669"/>
    <property type="project" value="UniProtKB-KW"/>
</dbReference>
<dbReference type="GO" id="GO:0046632">
    <property type="term" value="P:alpha-beta T cell differentiation"/>
    <property type="evidence" value="ECO:0007669"/>
    <property type="project" value="Ensembl"/>
</dbReference>
<dbReference type="GO" id="GO:0021902">
    <property type="term" value="P:commitment of neuronal cell to specific neuron type in forebrain"/>
    <property type="evidence" value="ECO:0007669"/>
    <property type="project" value="Ensembl"/>
</dbReference>
<dbReference type="GO" id="GO:0003382">
    <property type="term" value="P:epithelial cell morphogenesis"/>
    <property type="evidence" value="ECO:0007669"/>
    <property type="project" value="Ensembl"/>
</dbReference>
<dbReference type="GO" id="GO:0035701">
    <property type="term" value="P:hematopoietic stem cell migration"/>
    <property type="evidence" value="ECO:0000315"/>
    <property type="project" value="UniProtKB"/>
</dbReference>
<dbReference type="GO" id="GO:0003334">
    <property type="term" value="P:keratinocyte development"/>
    <property type="evidence" value="ECO:0007669"/>
    <property type="project" value="Ensembl"/>
</dbReference>
<dbReference type="GO" id="GO:0097535">
    <property type="term" value="P:lymphoid lineage cell migration into thymus"/>
    <property type="evidence" value="ECO:0000315"/>
    <property type="project" value="UniProtKB"/>
</dbReference>
<dbReference type="GO" id="GO:0008285">
    <property type="term" value="P:negative regulation of cell population proliferation"/>
    <property type="evidence" value="ECO:0007669"/>
    <property type="project" value="Ensembl"/>
</dbReference>
<dbReference type="GO" id="GO:0070244">
    <property type="term" value="P:negative regulation of thymocyte apoptotic process"/>
    <property type="evidence" value="ECO:0007669"/>
    <property type="project" value="Ensembl"/>
</dbReference>
<dbReference type="GO" id="GO:0042475">
    <property type="term" value="P:odontogenesis of dentin-containing tooth"/>
    <property type="evidence" value="ECO:0007669"/>
    <property type="project" value="Ensembl"/>
</dbReference>
<dbReference type="GO" id="GO:0071678">
    <property type="term" value="P:olfactory bulb axon guidance"/>
    <property type="evidence" value="ECO:0007669"/>
    <property type="project" value="Ensembl"/>
</dbReference>
<dbReference type="GO" id="GO:0045944">
    <property type="term" value="P:positive regulation of transcription by RNA polymerase II"/>
    <property type="evidence" value="ECO:0000315"/>
    <property type="project" value="MGI"/>
</dbReference>
<dbReference type="GO" id="GO:0043368">
    <property type="term" value="P:positive T cell selection"/>
    <property type="evidence" value="ECO:0007669"/>
    <property type="project" value="Ensembl"/>
</dbReference>
<dbReference type="GO" id="GO:0031077">
    <property type="term" value="P:post-embryonic camera-type eye development"/>
    <property type="evidence" value="ECO:0007669"/>
    <property type="project" value="Ensembl"/>
</dbReference>
<dbReference type="GO" id="GO:0010837">
    <property type="term" value="P:regulation of keratinocyte proliferation"/>
    <property type="evidence" value="ECO:0007669"/>
    <property type="project" value="Ensembl"/>
</dbReference>
<dbReference type="GO" id="GO:0019216">
    <property type="term" value="P:regulation of lipid metabolic process"/>
    <property type="evidence" value="ECO:0007669"/>
    <property type="project" value="Ensembl"/>
</dbReference>
<dbReference type="GO" id="GO:0045664">
    <property type="term" value="P:regulation of neuron differentiation"/>
    <property type="evidence" value="ECO:0007669"/>
    <property type="project" value="Ensembl"/>
</dbReference>
<dbReference type="GO" id="GO:0021773">
    <property type="term" value="P:striatal medium spiny neuron differentiation"/>
    <property type="evidence" value="ECO:0007669"/>
    <property type="project" value="Ensembl"/>
</dbReference>
<dbReference type="GO" id="GO:0033077">
    <property type="term" value="P:T cell differentiation in thymus"/>
    <property type="evidence" value="ECO:0007669"/>
    <property type="project" value="Ensembl"/>
</dbReference>
<dbReference type="GO" id="GO:0033153">
    <property type="term" value="P:T cell receptor V(D)J recombination"/>
    <property type="evidence" value="ECO:0007669"/>
    <property type="project" value="Ensembl"/>
</dbReference>
<dbReference type="GO" id="GO:0070242">
    <property type="term" value="P:thymocyte apoptotic process"/>
    <property type="evidence" value="ECO:0007669"/>
    <property type="project" value="Ensembl"/>
</dbReference>
<dbReference type="GO" id="GO:0048538">
    <property type="term" value="P:thymus development"/>
    <property type="evidence" value="ECO:0007669"/>
    <property type="project" value="Ensembl"/>
</dbReference>
<dbReference type="GO" id="GO:0006366">
    <property type="term" value="P:transcription by RNA polymerase II"/>
    <property type="evidence" value="ECO:0007669"/>
    <property type="project" value="Ensembl"/>
</dbReference>
<dbReference type="FunFam" id="3.30.160.60:FF:000037">
    <property type="entry name" value="B-cell lymphoma/leukemia 11A isoform X1"/>
    <property type="match status" value="1"/>
</dbReference>
<dbReference type="FunFam" id="3.30.160.60:FF:000106">
    <property type="entry name" value="B-cell lymphoma/leukemia 11A isoform X2"/>
    <property type="match status" value="1"/>
</dbReference>
<dbReference type="FunFam" id="3.30.160.60:FF:000046">
    <property type="entry name" value="Putative B-cell lymphoma/leukemia 11A"/>
    <property type="match status" value="1"/>
</dbReference>
<dbReference type="FunFam" id="3.30.160.60:FF:001175">
    <property type="entry name" value="Zinc finger, C2H2 type"/>
    <property type="match status" value="1"/>
</dbReference>
<dbReference type="Gene3D" id="3.30.160.60">
    <property type="entry name" value="Classic Zinc Finger"/>
    <property type="match status" value="5"/>
</dbReference>
<dbReference type="InterPro" id="IPR051497">
    <property type="entry name" value="Dev/Hematopoietic_TF"/>
</dbReference>
<dbReference type="InterPro" id="IPR056438">
    <property type="entry name" value="Znf-C2H2_CTCF"/>
</dbReference>
<dbReference type="InterPro" id="IPR036236">
    <property type="entry name" value="Znf_C2H2_sf"/>
</dbReference>
<dbReference type="InterPro" id="IPR013087">
    <property type="entry name" value="Znf_C2H2_type"/>
</dbReference>
<dbReference type="PANTHER" id="PTHR45993">
    <property type="entry name" value="B-CELL LYMPHOMA/LEUKEMIA 11"/>
    <property type="match status" value="1"/>
</dbReference>
<dbReference type="PANTHER" id="PTHR45993:SF4">
    <property type="entry name" value="B-CELL LYMPHOMA_LEUKEMIA 11B"/>
    <property type="match status" value="1"/>
</dbReference>
<dbReference type="Pfam" id="PF25491">
    <property type="entry name" value="CCHC_BCL-11A"/>
    <property type="match status" value="1"/>
</dbReference>
<dbReference type="Pfam" id="PF00096">
    <property type="entry name" value="zf-C2H2"/>
    <property type="match status" value="4"/>
</dbReference>
<dbReference type="Pfam" id="PF23611">
    <property type="entry name" value="zf-C2H2_16"/>
    <property type="match status" value="1"/>
</dbReference>
<dbReference type="SMART" id="SM00355">
    <property type="entry name" value="ZnF_C2H2"/>
    <property type="match status" value="6"/>
</dbReference>
<dbReference type="SUPFAM" id="SSF57667">
    <property type="entry name" value="beta-beta-alpha zinc fingers"/>
    <property type="match status" value="3"/>
</dbReference>
<dbReference type="PROSITE" id="PS00028">
    <property type="entry name" value="ZINC_FINGER_C2H2_1"/>
    <property type="match status" value="6"/>
</dbReference>
<dbReference type="PROSITE" id="PS50157">
    <property type="entry name" value="ZINC_FINGER_C2H2_2"/>
    <property type="match status" value="6"/>
</dbReference>
<organism>
    <name type="scientific">Homo sapiens</name>
    <name type="common">Human</name>
    <dbReference type="NCBI Taxonomy" id="9606"/>
    <lineage>
        <taxon>Eukaryota</taxon>
        <taxon>Metazoa</taxon>
        <taxon>Chordata</taxon>
        <taxon>Craniata</taxon>
        <taxon>Vertebrata</taxon>
        <taxon>Euteleostomi</taxon>
        <taxon>Mammalia</taxon>
        <taxon>Eutheria</taxon>
        <taxon>Euarchontoglires</taxon>
        <taxon>Primates</taxon>
        <taxon>Haplorrhini</taxon>
        <taxon>Catarrhini</taxon>
        <taxon>Hominidae</taxon>
        <taxon>Homo</taxon>
    </lineage>
</organism>
<feature type="chain" id="PRO_0000047104" description="B-cell lymphoma/leukemia 11B">
    <location>
        <begin position="1"/>
        <end position="894"/>
    </location>
</feature>
<feature type="zinc finger region" description="C2H2-type 1" evidence="3">
    <location>
        <begin position="221"/>
        <end position="251"/>
    </location>
</feature>
<feature type="zinc finger region" description="C2H2-type 2" evidence="3">
    <location>
        <begin position="427"/>
        <end position="454"/>
    </location>
</feature>
<feature type="zinc finger region" description="C2H2-type 3" evidence="3">
    <location>
        <begin position="455"/>
        <end position="482"/>
    </location>
</feature>
<feature type="zinc finger region" description="C2H2-type 4" evidence="3">
    <location>
        <begin position="796"/>
        <end position="823"/>
    </location>
</feature>
<feature type="zinc finger region" description="C2H2-type 5" evidence="3">
    <location>
        <begin position="824"/>
        <end position="853"/>
    </location>
</feature>
<feature type="zinc finger region" description="C2H2-type 6" evidence="3">
    <location>
        <begin position="854"/>
        <end position="884"/>
    </location>
</feature>
<feature type="region of interest" description="Disordered" evidence="4">
    <location>
        <begin position="370"/>
        <end position="428"/>
    </location>
</feature>
<feature type="region of interest" description="Disordered" evidence="4">
    <location>
        <begin position="471"/>
        <end position="583"/>
    </location>
</feature>
<feature type="region of interest" description="Disordered" evidence="4">
    <location>
        <begin position="653"/>
        <end position="680"/>
    </location>
</feature>
<feature type="region of interest" description="Disordered" evidence="4">
    <location>
        <begin position="737"/>
        <end position="794"/>
    </location>
</feature>
<feature type="compositionally biased region" description="Pro residues" evidence="4">
    <location>
        <begin position="396"/>
        <end position="423"/>
    </location>
</feature>
<feature type="compositionally biased region" description="Basic residues" evidence="4">
    <location>
        <begin position="471"/>
        <end position="480"/>
    </location>
</feature>
<feature type="compositionally biased region" description="Basic and acidic residues" evidence="4">
    <location>
        <begin position="511"/>
        <end position="529"/>
    </location>
</feature>
<feature type="compositionally biased region" description="Acidic residues" evidence="4">
    <location>
        <begin position="530"/>
        <end position="546"/>
    </location>
</feature>
<feature type="compositionally biased region" description="Gly residues" evidence="4">
    <location>
        <begin position="568"/>
        <end position="583"/>
    </location>
</feature>
<feature type="compositionally biased region" description="Polar residues" evidence="4">
    <location>
        <begin position="737"/>
        <end position="752"/>
    </location>
</feature>
<feature type="compositionally biased region" description="Low complexity" evidence="4">
    <location>
        <begin position="753"/>
        <end position="775"/>
    </location>
</feature>
<feature type="modified residue" description="Phosphoserine" evidence="13">
    <location>
        <position position="97"/>
    </location>
</feature>
<feature type="modified residue" description="Phosphoserine" evidence="2">
    <location>
        <position position="110"/>
    </location>
</feature>
<feature type="modified residue" description="Phosphothreonine" evidence="13">
    <location>
        <position position="120"/>
    </location>
</feature>
<feature type="modified residue" description="Phosphoserine" evidence="2">
    <location>
        <position position="129"/>
    </location>
</feature>
<feature type="modified residue" description="Phosphoserine" evidence="13">
    <location>
        <position position="256"/>
    </location>
</feature>
<feature type="modified residue" description="Phosphothreonine" evidence="13">
    <location>
        <position position="260"/>
    </location>
</feature>
<feature type="modified residue" description="Phosphoserine" evidence="13">
    <location>
        <position position="277"/>
    </location>
</feature>
<feature type="modified residue" description="Omega-N-methylarginine" evidence="2">
    <location>
        <position position="293"/>
    </location>
</feature>
<feature type="modified residue" description="Asymmetric dimethylarginine" evidence="2">
    <location>
        <position position="322"/>
    </location>
</feature>
<feature type="modified residue" description="Phosphoserine" evidence="13">
    <location>
        <position position="358"/>
    </location>
</feature>
<feature type="modified residue" description="Phosphothreonine" evidence="13">
    <location>
        <position position="376"/>
    </location>
</feature>
<feature type="modified residue" description="Phosphoserine" evidence="13 14">
    <location>
        <position position="381"/>
    </location>
</feature>
<feature type="modified residue" description="Phosphoserine" evidence="13">
    <location>
        <position position="398"/>
    </location>
</feature>
<feature type="modified residue" description="Phosphoserine" evidence="2">
    <location>
        <position position="401"/>
    </location>
</feature>
<feature type="modified residue" description="Phosphothreonine" evidence="2">
    <location>
        <position position="406"/>
    </location>
</feature>
<feature type="modified residue" description="Phosphothreonine" evidence="13">
    <location>
        <position position="417"/>
    </location>
</feature>
<feature type="modified residue" description="Phosphoserine" evidence="13">
    <location>
        <position position="483"/>
    </location>
</feature>
<feature type="modified residue" description="Phosphoserine" evidence="13">
    <location>
        <position position="488"/>
    </location>
</feature>
<feature type="modified residue" description="Phosphoserine" evidence="13">
    <location>
        <position position="496"/>
    </location>
</feature>
<feature type="modified residue" description="Phosphoserine" evidence="13">
    <location>
        <position position="497"/>
    </location>
</feature>
<feature type="modified residue" description="Phosphoserine" evidence="13">
    <location>
        <position position="678"/>
    </location>
</feature>
<feature type="modified residue" description="Phosphothreonine" evidence="2">
    <location>
        <position position="754"/>
    </location>
</feature>
<feature type="modified residue" description="Phosphoserine" evidence="13">
    <location>
        <position position="765"/>
    </location>
</feature>
<feature type="modified residue" description="Phosphoserine" evidence="2">
    <location>
        <position position="772"/>
    </location>
</feature>
<feature type="modified residue" description="N6-acetyllysine" evidence="12">
    <location>
        <position position="851"/>
    </location>
</feature>
<feature type="cross-link" description="Glycyl lysine isopeptide (Lys-Gly) (interchain with G-Cter in SUMO2)" evidence="16">
    <location>
        <position position="137"/>
    </location>
</feature>
<feature type="cross-link" description="Glycyl lysine isopeptide (Lys-Gly) (interchain with G-Cter in SUMO2)" evidence="15 16">
    <location>
        <position position="591"/>
    </location>
</feature>
<feature type="cross-link" description="Glycyl lysine isopeptide (Lys-Gly) (interchain with G-Cter in SUMO2)" evidence="16">
    <location>
        <position position="617"/>
    </location>
</feature>
<feature type="cross-link" description="Glycyl lysine isopeptide (Lys-Gly) (interchain with G-Cter in SUMO2)" evidence="16">
    <location>
        <position position="686"/>
    </location>
</feature>
<feature type="cross-link" description="Glycyl lysine isopeptide (Lys-Gly) (interchain with G-Cter in SUMO2)" evidence="16">
    <location>
        <position position="723"/>
    </location>
</feature>
<feature type="cross-link" description="Glycyl lysine isopeptide (Lys-Gly) (interchain with G-Cter in SUMO2)" evidence="15 16">
    <location>
        <position position="887"/>
    </location>
</feature>
<feature type="splice variant" id="VSP_009565" description="In isoform 2." evidence="10">
    <location>
        <begin position="143"/>
        <end position="213"/>
    </location>
</feature>
<feature type="sequence variant" id="VAR_065741" description="In a patient with amyotrophic lateral sclerosis." evidence="7">
    <original>E</original>
    <variation>V</variation>
    <location>
        <position position="32"/>
    </location>
</feature>
<feature type="sequence variant" id="VAR_065742" description="In a patient with amyotrophic lateral sclerosis; dbSNP:rs749837100." evidence="7">
    <original>P</original>
    <variation>S</variation>
    <location>
        <position position="229"/>
    </location>
</feature>
<feature type="sequence variant" id="VAR_035554" description="In a colorectal cancer sample; somatic mutation." evidence="6">
    <original>S</original>
    <variation>P</variation>
    <location>
        <position position="331"/>
    </location>
</feature>
<feature type="sequence variant" id="VAR_078423" description="In IMD49; loss of stimulation of T-lymphocyte development; dominant negative loss of activation of IL2 expression; results in reduced binding to known canonical promoters and abnormal binding to novel DNA sites not recognized by the wild-type protein; no effect on interaction with EP300; dbSNP:rs750610248." evidence="8">
    <original>N</original>
    <variation>K</variation>
    <location>
        <position position="441"/>
    </location>
</feature>
<feature type="sequence variant" id="VAR_081174" description="In IDDSFTA." evidence="9">
    <location>
        <begin position="499"/>
        <end position="894"/>
    </location>
</feature>
<feature type="sequence variant" id="VAR_081175" description="In IMD49; dbSNP:rs888230251." evidence="9">
    <original>N</original>
    <variation>K</variation>
    <location>
        <position position="807"/>
    </location>
</feature>
<feature type="cross-link" description="Glycyl lysine isopeptide (Lys-Gly) (interchain with G-Cter in SUMO2)" evidence="15 16">
    <location sequence="Q9C0K0-2">
        <position position="137"/>
    </location>
</feature>
<comment type="function">
    <text evidence="2 5 8">Key regulator of both differentiation and survival of T-lymphocytes during thymocyte development in mammals. Essential in controlling the responsiveness of hematopoietic stem cells to chemotactic signals by modulating the expression of the receptors CCR7 and CCR9, which direct the movement of progenitor cells from the bone marrow to the thymus (PubMed:27959755). Is a regulator of IL2 promoter and enhances IL2 expression in activated CD4(+) T-lymphocytes (PubMed:16809611). Tumor-suppressor that represses transcription through direct, TFCOUP2-independent binding to a GC-rich response element (By similarity). May also function in the P53-signaling pathway (By similarity).</text>
</comment>
<comment type="subunit">
    <text evidence="2 8">Interacts with TFCOUP1, SIRT1, ARP1 and EAR2 (By similarity). Interacts with EP300; the interaction is detected in activated T-lymphocytes, but not under resting conditions (PubMed:27959755).</text>
</comment>
<comment type="interaction">
    <interactant intactId="EBI-6597578">
        <id>Q9C0K0</id>
    </interactant>
    <interactant intactId="EBI-301834">
        <id>Q13547</id>
        <label>HDAC1</label>
    </interactant>
    <organismsDiffer>false</organismsDiffer>
    <experiments>5</experiments>
</comment>
<comment type="interaction">
    <interactant intactId="EBI-6597578">
        <id>Q9C0K0</id>
    </interactant>
    <interactant intactId="EBI-301821">
        <id>Q92769</id>
        <label>HDAC2</label>
    </interactant>
    <organismsDiffer>false</organismsDiffer>
    <experiments>5</experiments>
</comment>
<comment type="interaction">
    <interactant intactId="EBI-6597578">
        <id>Q9C0K0</id>
    </interactant>
    <interactant intactId="EBI-349968">
        <id>O43463</id>
        <label>SUV39H1</label>
    </interactant>
    <organismsDiffer>false</organismsDiffer>
    <experiments>3</experiments>
</comment>
<comment type="subcellular location">
    <subcellularLocation>
        <location evidence="11">Nucleus</location>
    </subcellularLocation>
</comment>
<comment type="alternative products">
    <event type="alternative splicing"/>
    <isoform>
        <id>Q9C0K0-1</id>
        <name>1</name>
        <name>Alpha</name>
        <sequence type="displayed"/>
    </isoform>
    <isoform>
        <id>Q9C0K0-2</id>
        <name>2</name>
        <sequence type="described" ref="VSP_009565"/>
    </isoform>
</comment>
<comment type="tissue specificity">
    <text>Highly expressed in brain and in malignant T-cell lines derived from patients with adult T-cell leukemia/lymphoma.</text>
</comment>
<comment type="PTM">
    <text evidence="1">Sumoylated with SUMO1.</text>
</comment>
<comment type="disease" evidence="8 9">
    <disease id="DI-04911">
        <name>Immunodeficiency 49, severe combined</name>
        <acronym>IMD49</acronym>
        <description>A form of severe combined immunodeficiency characterized by severe T-cell lymphopenia, no detectable T-cell receptor excision circles, no naive helper CD4+ T-cells, and impaired T-cell proliferative response. In addition to primary immunodeficiency, affected individuals manifest multiple abnormal systemic features, including severe delayed psychomotor development, intellectual disability, spastic quadriplegia, and craniofacial abnormalities.</description>
        <dbReference type="MIM" id="617237"/>
    </disease>
    <text>The disease is caused by variants affecting the gene represented in this entry.</text>
</comment>
<comment type="disease" evidence="9">
    <disease id="DI-05315">
        <name>Intellectual developmental disorder with speech delay, dysmorphic facies, and T-cell abnormalities</name>
        <acronym>IDDSFTA</acronym>
        <description>An autosomal dominant developmental disorder with onset in first months of life, and characterized by delayed psychomotor development with intellectual disability and speech delay. Additional features include autistic features, attention deficit-hyperactivity disorder, anxiety, and other behavioral abnormalities. Some patients suffer from recurrent infections, asthma and allergies.</description>
        <dbReference type="MIM" id="618092"/>
    </disease>
    <text>The disease is caused by variants affecting the gene represented in this entry.</text>
</comment>
<comment type="miscellaneous">
    <molecule>Isoform 2</molecule>
    <text evidence="11">May be due to exon skipping.</text>
</comment>
<comment type="online information" name="Atlas of Genetics and Cytogenetics in Oncology and Haematology">
    <link uri="https://atlasgeneticsoncology.org/gene/392/BCL11B"/>
</comment>